<reference key="1">
    <citation type="submission" date="2007-03" db="EMBL/GenBank/DDBJ databases">
        <title>Genome sequence of Rhodospirillum centenum.</title>
        <authorList>
            <person name="Touchman J.W."/>
            <person name="Bauer C."/>
            <person name="Blankenship R.E."/>
        </authorList>
    </citation>
    <scope>NUCLEOTIDE SEQUENCE [LARGE SCALE GENOMIC DNA]</scope>
    <source>
        <strain>ATCC 51521 / SW</strain>
    </source>
</reference>
<accession>B6IRR9</accession>
<protein>
    <recommendedName>
        <fullName evidence="1">Small ribosomal subunit protein uS14</fullName>
    </recommendedName>
    <alternativeName>
        <fullName evidence="3">30S ribosomal protein S14</fullName>
    </alternativeName>
</protein>
<name>RS14_RHOCS</name>
<feature type="chain" id="PRO_1000128537" description="Small ribosomal subunit protein uS14">
    <location>
        <begin position="1"/>
        <end position="101"/>
    </location>
</feature>
<feature type="region of interest" description="Disordered" evidence="2">
    <location>
        <begin position="1"/>
        <end position="23"/>
    </location>
</feature>
<evidence type="ECO:0000255" key="1">
    <source>
        <dbReference type="HAMAP-Rule" id="MF_00537"/>
    </source>
</evidence>
<evidence type="ECO:0000256" key="2">
    <source>
        <dbReference type="SAM" id="MobiDB-lite"/>
    </source>
</evidence>
<evidence type="ECO:0000305" key="3"/>
<organism>
    <name type="scientific">Rhodospirillum centenum (strain ATCC 51521 / SW)</name>
    <dbReference type="NCBI Taxonomy" id="414684"/>
    <lineage>
        <taxon>Bacteria</taxon>
        <taxon>Pseudomonadati</taxon>
        <taxon>Pseudomonadota</taxon>
        <taxon>Alphaproteobacteria</taxon>
        <taxon>Rhodospirillales</taxon>
        <taxon>Rhodospirillaceae</taxon>
        <taxon>Rhodospirillum</taxon>
    </lineage>
</organism>
<keyword id="KW-1185">Reference proteome</keyword>
<keyword id="KW-0687">Ribonucleoprotein</keyword>
<keyword id="KW-0689">Ribosomal protein</keyword>
<keyword id="KW-0694">RNA-binding</keyword>
<keyword id="KW-0699">rRNA-binding</keyword>
<sequence>MAKKSSVEKNKRRRKMVAQQAPKREALRAIARDRTLPPEERFQAVLKLAEMPRNGSKVRIRNRCELTGRPRAYYRKFRLSRVTLRELASTGQIPGMTKSSW</sequence>
<proteinExistence type="inferred from homology"/>
<gene>
    <name evidence="1" type="primary">rpsN</name>
    <name type="ordered locus">RC1_0724</name>
</gene>
<dbReference type="EMBL" id="CP000613">
    <property type="protein sequence ID" value="ACI98155.1"/>
    <property type="molecule type" value="Genomic_DNA"/>
</dbReference>
<dbReference type="RefSeq" id="WP_012565946.1">
    <property type="nucleotide sequence ID" value="NC_011420.2"/>
</dbReference>
<dbReference type="SMR" id="B6IRR9"/>
<dbReference type="STRING" id="414684.RC1_0724"/>
<dbReference type="KEGG" id="rce:RC1_0724"/>
<dbReference type="eggNOG" id="COG0199">
    <property type="taxonomic scope" value="Bacteria"/>
</dbReference>
<dbReference type="HOGENOM" id="CLU_139869_0_1_5"/>
<dbReference type="OrthoDB" id="9810484at2"/>
<dbReference type="Proteomes" id="UP000001591">
    <property type="component" value="Chromosome"/>
</dbReference>
<dbReference type="GO" id="GO:0005737">
    <property type="term" value="C:cytoplasm"/>
    <property type="evidence" value="ECO:0007669"/>
    <property type="project" value="UniProtKB-ARBA"/>
</dbReference>
<dbReference type="GO" id="GO:0015935">
    <property type="term" value="C:small ribosomal subunit"/>
    <property type="evidence" value="ECO:0007669"/>
    <property type="project" value="TreeGrafter"/>
</dbReference>
<dbReference type="GO" id="GO:0019843">
    <property type="term" value="F:rRNA binding"/>
    <property type="evidence" value="ECO:0007669"/>
    <property type="project" value="UniProtKB-UniRule"/>
</dbReference>
<dbReference type="GO" id="GO:0003735">
    <property type="term" value="F:structural constituent of ribosome"/>
    <property type="evidence" value="ECO:0007669"/>
    <property type="project" value="InterPro"/>
</dbReference>
<dbReference type="GO" id="GO:0006412">
    <property type="term" value="P:translation"/>
    <property type="evidence" value="ECO:0007669"/>
    <property type="project" value="UniProtKB-UniRule"/>
</dbReference>
<dbReference type="FunFam" id="1.10.287.1480:FF:000001">
    <property type="entry name" value="30S ribosomal protein S14"/>
    <property type="match status" value="1"/>
</dbReference>
<dbReference type="Gene3D" id="1.10.287.1480">
    <property type="match status" value="1"/>
</dbReference>
<dbReference type="HAMAP" id="MF_00537">
    <property type="entry name" value="Ribosomal_uS14_1"/>
    <property type="match status" value="1"/>
</dbReference>
<dbReference type="InterPro" id="IPR001209">
    <property type="entry name" value="Ribosomal_uS14"/>
</dbReference>
<dbReference type="InterPro" id="IPR023036">
    <property type="entry name" value="Ribosomal_uS14_bac/plastid"/>
</dbReference>
<dbReference type="InterPro" id="IPR018271">
    <property type="entry name" value="Ribosomal_uS14_CS"/>
</dbReference>
<dbReference type="NCBIfam" id="NF006477">
    <property type="entry name" value="PRK08881.1"/>
    <property type="match status" value="1"/>
</dbReference>
<dbReference type="PANTHER" id="PTHR19836">
    <property type="entry name" value="30S RIBOSOMAL PROTEIN S14"/>
    <property type="match status" value="1"/>
</dbReference>
<dbReference type="PANTHER" id="PTHR19836:SF19">
    <property type="entry name" value="SMALL RIBOSOMAL SUBUNIT PROTEIN US14M"/>
    <property type="match status" value="1"/>
</dbReference>
<dbReference type="Pfam" id="PF00253">
    <property type="entry name" value="Ribosomal_S14"/>
    <property type="match status" value="1"/>
</dbReference>
<dbReference type="SUPFAM" id="SSF57716">
    <property type="entry name" value="Glucocorticoid receptor-like (DNA-binding domain)"/>
    <property type="match status" value="1"/>
</dbReference>
<dbReference type="PROSITE" id="PS00527">
    <property type="entry name" value="RIBOSOMAL_S14"/>
    <property type="match status" value="1"/>
</dbReference>
<comment type="function">
    <text evidence="1">Binds 16S rRNA, required for the assembly of 30S particles and may also be responsible for determining the conformation of the 16S rRNA at the A site.</text>
</comment>
<comment type="subunit">
    <text evidence="1">Part of the 30S ribosomal subunit. Contacts proteins S3 and S10.</text>
</comment>
<comment type="similarity">
    <text evidence="1">Belongs to the universal ribosomal protein uS14 family.</text>
</comment>